<dbReference type="PIR" id="S08563">
    <property type="entry name" value="R5BS27"/>
</dbReference>
<dbReference type="SMR" id="P07844"/>
<dbReference type="GO" id="GO:0022625">
    <property type="term" value="C:cytosolic large ribosomal subunit"/>
    <property type="evidence" value="ECO:0007669"/>
    <property type="project" value="TreeGrafter"/>
</dbReference>
<dbReference type="GO" id="GO:0003735">
    <property type="term" value="F:structural constituent of ribosome"/>
    <property type="evidence" value="ECO:0007669"/>
    <property type="project" value="InterPro"/>
</dbReference>
<dbReference type="GO" id="GO:0006412">
    <property type="term" value="P:translation"/>
    <property type="evidence" value="ECO:0007669"/>
    <property type="project" value="UniProtKB-UniRule"/>
</dbReference>
<dbReference type="FunFam" id="2.40.50.100:FF:000004">
    <property type="entry name" value="50S ribosomal protein L27"/>
    <property type="match status" value="1"/>
</dbReference>
<dbReference type="Gene3D" id="2.40.50.100">
    <property type="match status" value="1"/>
</dbReference>
<dbReference type="HAMAP" id="MF_00539">
    <property type="entry name" value="Ribosomal_bL27"/>
    <property type="match status" value="1"/>
</dbReference>
<dbReference type="InterPro" id="IPR001684">
    <property type="entry name" value="Ribosomal_bL27"/>
</dbReference>
<dbReference type="InterPro" id="IPR018261">
    <property type="entry name" value="Ribosomal_bL27_CS"/>
</dbReference>
<dbReference type="NCBIfam" id="TIGR00062">
    <property type="entry name" value="L27"/>
    <property type="match status" value="1"/>
</dbReference>
<dbReference type="PANTHER" id="PTHR15893:SF0">
    <property type="entry name" value="LARGE RIBOSOMAL SUBUNIT PROTEIN BL27M"/>
    <property type="match status" value="1"/>
</dbReference>
<dbReference type="PANTHER" id="PTHR15893">
    <property type="entry name" value="RIBOSOMAL PROTEIN L27"/>
    <property type="match status" value="1"/>
</dbReference>
<dbReference type="Pfam" id="PF01016">
    <property type="entry name" value="Ribosomal_L27"/>
    <property type="match status" value="1"/>
</dbReference>
<dbReference type="PRINTS" id="PR00063">
    <property type="entry name" value="RIBOSOMALL27"/>
</dbReference>
<dbReference type="SUPFAM" id="SSF110324">
    <property type="entry name" value="Ribosomal L27 protein-like"/>
    <property type="match status" value="1"/>
</dbReference>
<dbReference type="PROSITE" id="PS00831">
    <property type="entry name" value="RIBOSOMAL_L27"/>
    <property type="match status" value="1"/>
</dbReference>
<organism>
    <name type="scientific">Geobacillus stearothermophilus</name>
    <name type="common">Bacillus stearothermophilus</name>
    <dbReference type="NCBI Taxonomy" id="1422"/>
    <lineage>
        <taxon>Bacteria</taxon>
        <taxon>Bacillati</taxon>
        <taxon>Bacillota</taxon>
        <taxon>Bacilli</taxon>
        <taxon>Bacillales</taxon>
        <taxon>Anoxybacillaceae</taxon>
        <taxon>Geobacillus</taxon>
    </lineage>
</organism>
<feature type="initiator methionine" description="Removed" evidence="2">
    <location>
        <position position="1"/>
    </location>
</feature>
<feature type="chain" id="PRO_0000181043" description="Large ribosomal subunit protein bL27">
    <location>
        <begin position="2"/>
        <end position="88"/>
    </location>
</feature>
<feature type="region of interest" description="Disordered" evidence="1">
    <location>
        <begin position="1"/>
        <end position="20"/>
    </location>
</feature>
<gene>
    <name type="primary">rpmA</name>
</gene>
<sequence length="88" mass="9534">MASKKGVGSTKDGRDSIAKRLGAKRADGQFVTGGSILYRQRGTKVHPGLNVGRGGDDTLYAKIDGIVRFERLGRDRKRVSVYPVSQEA</sequence>
<proteinExistence type="evidence at protein level"/>
<accession>P07844</accession>
<reference key="1">
    <citation type="journal article" date="1984" name="Eur. J. Biochem.">
        <title>The complete amino acid sequences of ribosomal proteins L17, L27, and S9 from Bacillus stearothermophilus.</title>
        <authorList>
            <person name="Kimura M."/>
            <person name="Chow C.K."/>
        </authorList>
    </citation>
    <scope>PROTEIN SEQUENCE OF 2-88</scope>
    <source>
        <strain>ATCC 29609 / DSM 2027 / NCA 1503 / NCIMB 8924</strain>
    </source>
</reference>
<evidence type="ECO:0000256" key="1">
    <source>
        <dbReference type="SAM" id="MobiDB-lite"/>
    </source>
</evidence>
<evidence type="ECO:0000269" key="2">
    <source>
    </source>
</evidence>
<evidence type="ECO:0000305" key="3"/>
<protein>
    <recommendedName>
        <fullName evidence="3">Large ribosomal subunit protein bL27</fullName>
    </recommendedName>
    <alternativeName>
        <fullName>50S ribosomal protein L27</fullName>
    </alternativeName>
    <alternativeName>
        <fullName>BL30</fullName>
    </alternativeName>
</protein>
<comment type="similarity">
    <text evidence="3">Belongs to the bacterial ribosomal protein bL27 family.</text>
</comment>
<keyword id="KW-0903">Direct protein sequencing</keyword>
<keyword id="KW-0687">Ribonucleoprotein</keyword>
<keyword id="KW-0689">Ribosomal protein</keyword>
<name>RL27_GEOSE</name>